<accession>Q6N1Y1</accession>
<dbReference type="EC" id="1.17.7.4" evidence="1"/>
<dbReference type="EMBL" id="BX572606">
    <property type="protein sequence ID" value="CAE29712.1"/>
    <property type="molecule type" value="Genomic_DNA"/>
</dbReference>
<dbReference type="RefSeq" id="WP_011159806.1">
    <property type="nucleotide sequence ID" value="NZ_CP116810.1"/>
</dbReference>
<dbReference type="SMR" id="Q6N1Y1"/>
<dbReference type="STRING" id="258594.RPA4271"/>
<dbReference type="GeneID" id="66895397"/>
<dbReference type="eggNOG" id="COG0761">
    <property type="taxonomic scope" value="Bacteria"/>
</dbReference>
<dbReference type="HOGENOM" id="CLU_027486_1_0_5"/>
<dbReference type="PhylomeDB" id="Q6N1Y1"/>
<dbReference type="UniPathway" id="UPA00056">
    <property type="reaction ID" value="UER00097"/>
</dbReference>
<dbReference type="UniPathway" id="UPA00059">
    <property type="reaction ID" value="UER00105"/>
</dbReference>
<dbReference type="GO" id="GO:0051539">
    <property type="term" value="F:4 iron, 4 sulfur cluster binding"/>
    <property type="evidence" value="ECO:0007669"/>
    <property type="project" value="UniProtKB-UniRule"/>
</dbReference>
<dbReference type="GO" id="GO:0051745">
    <property type="term" value="F:4-hydroxy-3-methylbut-2-enyl diphosphate reductase activity"/>
    <property type="evidence" value="ECO:0007669"/>
    <property type="project" value="UniProtKB-UniRule"/>
</dbReference>
<dbReference type="GO" id="GO:0046872">
    <property type="term" value="F:metal ion binding"/>
    <property type="evidence" value="ECO:0007669"/>
    <property type="project" value="UniProtKB-KW"/>
</dbReference>
<dbReference type="GO" id="GO:0050992">
    <property type="term" value="P:dimethylallyl diphosphate biosynthetic process"/>
    <property type="evidence" value="ECO:0007669"/>
    <property type="project" value="UniProtKB-UniRule"/>
</dbReference>
<dbReference type="GO" id="GO:0019288">
    <property type="term" value="P:isopentenyl diphosphate biosynthetic process, methylerythritol 4-phosphate pathway"/>
    <property type="evidence" value="ECO:0007669"/>
    <property type="project" value="UniProtKB-UniRule"/>
</dbReference>
<dbReference type="GO" id="GO:0016114">
    <property type="term" value="P:terpenoid biosynthetic process"/>
    <property type="evidence" value="ECO:0007669"/>
    <property type="project" value="UniProtKB-UniRule"/>
</dbReference>
<dbReference type="CDD" id="cd13944">
    <property type="entry name" value="lytB_ispH"/>
    <property type="match status" value="1"/>
</dbReference>
<dbReference type="Gene3D" id="3.40.50.11270">
    <property type="match status" value="1"/>
</dbReference>
<dbReference type="Gene3D" id="3.40.1010.20">
    <property type="entry name" value="4-hydroxy-3-methylbut-2-enyl diphosphate reductase, catalytic domain"/>
    <property type="match status" value="2"/>
</dbReference>
<dbReference type="HAMAP" id="MF_00191">
    <property type="entry name" value="IspH"/>
    <property type="match status" value="1"/>
</dbReference>
<dbReference type="InterPro" id="IPR003451">
    <property type="entry name" value="LytB/IspH"/>
</dbReference>
<dbReference type="NCBIfam" id="TIGR00216">
    <property type="entry name" value="ispH_lytB"/>
    <property type="match status" value="1"/>
</dbReference>
<dbReference type="NCBIfam" id="NF002190">
    <property type="entry name" value="PRK01045.1-4"/>
    <property type="match status" value="1"/>
</dbReference>
<dbReference type="PANTHER" id="PTHR30426">
    <property type="entry name" value="4-HYDROXY-3-METHYLBUT-2-ENYL DIPHOSPHATE REDUCTASE"/>
    <property type="match status" value="1"/>
</dbReference>
<dbReference type="PANTHER" id="PTHR30426:SF0">
    <property type="entry name" value="4-HYDROXY-3-METHYLBUT-2-ENYL DIPHOSPHATE REDUCTASE"/>
    <property type="match status" value="1"/>
</dbReference>
<dbReference type="Pfam" id="PF02401">
    <property type="entry name" value="LYTB"/>
    <property type="match status" value="1"/>
</dbReference>
<proteinExistence type="inferred from homology"/>
<keyword id="KW-0004">4Fe-4S</keyword>
<keyword id="KW-0408">Iron</keyword>
<keyword id="KW-0411">Iron-sulfur</keyword>
<keyword id="KW-0414">Isoprene biosynthesis</keyword>
<keyword id="KW-0479">Metal-binding</keyword>
<keyword id="KW-0560">Oxidoreductase</keyword>
<protein>
    <recommendedName>
        <fullName evidence="1">4-hydroxy-3-methylbut-2-enyl diphosphate reductase 2</fullName>
        <shortName evidence="1">HMBPP reductase 2</shortName>
        <ecNumber evidence="1">1.17.7.4</ecNumber>
    </recommendedName>
</protein>
<comment type="function">
    <text evidence="1">Catalyzes the conversion of 1-hydroxy-2-methyl-2-(E)-butenyl 4-diphosphate (HMBPP) into a mixture of isopentenyl diphosphate (IPP) and dimethylallyl diphosphate (DMAPP). Acts in the terminal step of the DOXP/MEP pathway for isoprenoid precursor biosynthesis.</text>
</comment>
<comment type="catalytic activity">
    <reaction evidence="1">
        <text>isopentenyl diphosphate + 2 oxidized [2Fe-2S]-[ferredoxin] + H2O = (2E)-4-hydroxy-3-methylbut-2-enyl diphosphate + 2 reduced [2Fe-2S]-[ferredoxin] + 2 H(+)</text>
        <dbReference type="Rhea" id="RHEA:24488"/>
        <dbReference type="Rhea" id="RHEA-COMP:10000"/>
        <dbReference type="Rhea" id="RHEA-COMP:10001"/>
        <dbReference type="ChEBI" id="CHEBI:15377"/>
        <dbReference type="ChEBI" id="CHEBI:15378"/>
        <dbReference type="ChEBI" id="CHEBI:33737"/>
        <dbReference type="ChEBI" id="CHEBI:33738"/>
        <dbReference type="ChEBI" id="CHEBI:128753"/>
        <dbReference type="ChEBI" id="CHEBI:128769"/>
        <dbReference type="EC" id="1.17.7.4"/>
    </reaction>
</comment>
<comment type="catalytic activity">
    <reaction evidence="1">
        <text>dimethylallyl diphosphate + 2 oxidized [2Fe-2S]-[ferredoxin] + H2O = (2E)-4-hydroxy-3-methylbut-2-enyl diphosphate + 2 reduced [2Fe-2S]-[ferredoxin] + 2 H(+)</text>
        <dbReference type="Rhea" id="RHEA:24825"/>
        <dbReference type="Rhea" id="RHEA-COMP:10000"/>
        <dbReference type="Rhea" id="RHEA-COMP:10001"/>
        <dbReference type="ChEBI" id="CHEBI:15377"/>
        <dbReference type="ChEBI" id="CHEBI:15378"/>
        <dbReference type="ChEBI" id="CHEBI:33737"/>
        <dbReference type="ChEBI" id="CHEBI:33738"/>
        <dbReference type="ChEBI" id="CHEBI:57623"/>
        <dbReference type="ChEBI" id="CHEBI:128753"/>
        <dbReference type="EC" id="1.17.7.4"/>
    </reaction>
</comment>
<comment type="cofactor">
    <cofactor evidence="1">
        <name>[4Fe-4S] cluster</name>
        <dbReference type="ChEBI" id="CHEBI:49883"/>
    </cofactor>
    <text evidence="1">Binds 1 [4Fe-4S] cluster per subunit.</text>
</comment>
<comment type="pathway">
    <text evidence="1">Isoprenoid biosynthesis; dimethylallyl diphosphate biosynthesis; dimethylallyl diphosphate from (2E)-4-hydroxy-3-methylbutenyl diphosphate: step 1/1.</text>
</comment>
<comment type="pathway">
    <text evidence="1">Isoprenoid biosynthesis; isopentenyl diphosphate biosynthesis via DXP pathway; isopentenyl diphosphate from 1-deoxy-D-xylulose 5-phosphate: step 6/6.</text>
</comment>
<comment type="similarity">
    <text evidence="1">Belongs to the IspH family.</text>
</comment>
<organism>
    <name type="scientific">Rhodopseudomonas palustris (strain ATCC BAA-98 / CGA009)</name>
    <dbReference type="NCBI Taxonomy" id="258594"/>
    <lineage>
        <taxon>Bacteria</taxon>
        <taxon>Pseudomonadati</taxon>
        <taxon>Pseudomonadota</taxon>
        <taxon>Alphaproteobacteria</taxon>
        <taxon>Hyphomicrobiales</taxon>
        <taxon>Nitrobacteraceae</taxon>
        <taxon>Rhodopseudomonas</taxon>
    </lineage>
</organism>
<feature type="chain" id="PRO_0000128866" description="4-hydroxy-3-methylbut-2-enyl diphosphate reductase 2">
    <location>
        <begin position="1"/>
        <end position="320"/>
    </location>
</feature>
<feature type="active site" description="Proton donor" evidence="1">
    <location>
        <position position="133"/>
    </location>
</feature>
<feature type="binding site" evidence="1">
    <location>
        <position position="18"/>
    </location>
    <ligand>
        <name>[4Fe-4S] cluster</name>
        <dbReference type="ChEBI" id="CHEBI:49883"/>
    </ligand>
</feature>
<feature type="binding site" evidence="1">
    <location>
        <position position="47"/>
    </location>
    <ligand>
        <name>(2E)-4-hydroxy-3-methylbut-2-enyl diphosphate</name>
        <dbReference type="ChEBI" id="CHEBI:128753"/>
    </ligand>
</feature>
<feature type="binding site" evidence="1">
    <location>
        <position position="47"/>
    </location>
    <ligand>
        <name>dimethylallyl diphosphate</name>
        <dbReference type="ChEBI" id="CHEBI:57623"/>
    </ligand>
</feature>
<feature type="binding site" evidence="1">
    <location>
        <position position="47"/>
    </location>
    <ligand>
        <name>isopentenyl diphosphate</name>
        <dbReference type="ChEBI" id="CHEBI:128769"/>
    </ligand>
</feature>
<feature type="binding site" evidence="1">
    <location>
        <position position="81"/>
    </location>
    <ligand>
        <name>(2E)-4-hydroxy-3-methylbut-2-enyl diphosphate</name>
        <dbReference type="ChEBI" id="CHEBI:128753"/>
    </ligand>
</feature>
<feature type="binding site" evidence="1">
    <location>
        <position position="81"/>
    </location>
    <ligand>
        <name>dimethylallyl diphosphate</name>
        <dbReference type="ChEBI" id="CHEBI:57623"/>
    </ligand>
</feature>
<feature type="binding site" evidence="1">
    <location>
        <position position="81"/>
    </location>
    <ligand>
        <name>isopentenyl diphosphate</name>
        <dbReference type="ChEBI" id="CHEBI:128769"/>
    </ligand>
</feature>
<feature type="binding site" evidence="1">
    <location>
        <position position="103"/>
    </location>
    <ligand>
        <name>[4Fe-4S] cluster</name>
        <dbReference type="ChEBI" id="CHEBI:49883"/>
    </ligand>
</feature>
<feature type="binding site" evidence="1">
    <location>
        <position position="131"/>
    </location>
    <ligand>
        <name>(2E)-4-hydroxy-3-methylbut-2-enyl diphosphate</name>
        <dbReference type="ChEBI" id="CHEBI:128753"/>
    </ligand>
</feature>
<feature type="binding site" evidence="1">
    <location>
        <position position="131"/>
    </location>
    <ligand>
        <name>dimethylallyl diphosphate</name>
        <dbReference type="ChEBI" id="CHEBI:57623"/>
    </ligand>
</feature>
<feature type="binding site" evidence="1">
    <location>
        <position position="131"/>
    </location>
    <ligand>
        <name>isopentenyl diphosphate</name>
        <dbReference type="ChEBI" id="CHEBI:128769"/>
    </ligand>
</feature>
<feature type="binding site" evidence="1">
    <location>
        <position position="172"/>
    </location>
    <ligand>
        <name>(2E)-4-hydroxy-3-methylbut-2-enyl diphosphate</name>
        <dbReference type="ChEBI" id="CHEBI:128753"/>
    </ligand>
</feature>
<feature type="binding site" evidence="1">
    <location>
        <position position="202"/>
    </location>
    <ligand>
        <name>[4Fe-4S] cluster</name>
        <dbReference type="ChEBI" id="CHEBI:49883"/>
    </ligand>
</feature>
<feature type="binding site" evidence="1">
    <location>
        <position position="230"/>
    </location>
    <ligand>
        <name>(2E)-4-hydroxy-3-methylbut-2-enyl diphosphate</name>
        <dbReference type="ChEBI" id="CHEBI:128753"/>
    </ligand>
</feature>
<feature type="binding site" evidence="1">
    <location>
        <position position="230"/>
    </location>
    <ligand>
        <name>dimethylallyl diphosphate</name>
        <dbReference type="ChEBI" id="CHEBI:57623"/>
    </ligand>
</feature>
<feature type="binding site" evidence="1">
    <location>
        <position position="230"/>
    </location>
    <ligand>
        <name>isopentenyl diphosphate</name>
        <dbReference type="ChEBI" id="CHEBI:128769"/>
    </ligand>
</feature>
<feature type="binding site" evidence="1">
    <location>
        <position position="231"/>
    </location>
    <ligand>
        <name>(2E)-4-hydroxy-3-methylbut-2-enyl diphosphate</name>
        <dbReference type="ChEBI" id="CHEBI:128753"/>
    </ligand>
</feature>
<feature type="binding site" evidence="1">
    <location>
        <position position="231"/>
    </location>
    <ligand>
        <name>dimethylallyl diphosphate</name>
        <dbReference type="ChEBI" id="CHEBI:57623"/>
    </ligand>
</feature>
<feature type="binding site" evidence="1">
    <location>
        <position position="231"/>
    </location>
    <ligand>
        <name>isopentenyl diphosphate</name>
        <dbReference type="ChEBI" id="CHEBI:128769"/>
    </ligand>
</feature>
<feature type="binding site" evidence="1">
    <location>
        <position position="232"/>
    </location>
    <ligand>
        <name>(2E)-4-hydroxy-3-methylbut-2-enyl diphosphate</name>
        <dbReference type="ChEBI" id="CHEBI:128753"/>
    </ligand>
</feature>
<feature type="binding site" evidence="1">
    <location>
        <position position="232"/>
    </location>
    <ligand>
        <name>dimethylallyl diphosphate</name>
        <dbReference type="ChEBI" id="CHEBI:57623"/>
    </ligand>
</feature>
<feature type="binding site" evidence="1">
    <location>
        <position position="232"/>
    </location>
    <ligand>
        <name>isopentenyl diphosphate</name>
        <dbReference type="ChEBI" id="CHEBI:128769"/>
    </ligand>
</feature>
<feature type="binding site" evidence="1">
    <location>
        <position position="275"/>
    </location>
    <ligand>
        <name>(2E)-4-hydroxy-3-methylbut-2-enyl diphosphate</name>
        <dbReference type="ChEBI" id="CHEBI:128753"/>
    </ligand>
</feature>
<feature type="binding site" evidence="1">
    <location>
        <position position="275"/>
    </location>
    <ligand>
        <name>dimethylallyl diphosphate</name>
        <dbReference type="ChEBI" id="CHEBI:57623"/>
    </ligand>
</feature>
<feature type="binding site" evidence="1">
    <location>
        <position position="275"/>
    </location>
    <ligand>
        <name>isopentenyl diphosphate</name>
        <dbReference type="ChEBI" id="CHEBI:128769"/>
    </ligand>
</feature>
<gene>
    <name evidence="1" type="primary">ispH2</name>
    <name type="synonym">lytB2</name>
    <name type="ordered locus">RPA4271</name>
</gene>
<reference key="1">
    <citation type="journal article" date="2004" name="Nat. Biotechnol.">
        <title>Complete genome sequence of the metabolically versatile photosynthetic bacterium Rhodopseudomonas palustris.</title>
        <authorList>
            <person name="Larimer F.W."/>
            <person name="Chain P."/>
            <person name="Hauser L."/>
            <person name="Lamerdin J.E."/>
            <person name="Malfatti S."/>
            <person name="Do L."/>
            <person name="Land M.L."/>
            <person name="Pelletier D.A."/>
            <person name="Beatty J.T."/>
            <person name="Lang A.S."/>
            <person name="Tabita F.R."/>
            <person name="Gibson J.L."/>
            <person name="Hanson T.E."/>
            <person name="Bobst C."/>
            <person name="Torres y Torres J.L."/>
            <person name="Peres C."/>
            <person name="Harrison F.H."/>
            <person name="Gibson J."/>
            <person name="Harwood C.S."/>
        </authorList>
    </citation>
    <scope>NUCLEOTIDE SEQUENCE [LARGE SCALE GENOMIC DNA]</scope>
    <source>
        <strain>ATCC BAA-98 / CGA009</strain>
    </source>
</reference>
<evidence type="ECO:0000255" key="1">
    <source>
        <dbReference type="HAMAP-Rule" id="MF_00191"/>
    </source>
</evidence>
<name>ISPH2_RHOPA</name>
<sequence length="320" mass="34614">MLAKSPLKIVLCSPRGFCAGVVRAIDTVERALALYGAPVYVRHEIVHNKYVVDSLRAKGAIFVEELEEIPDTKAPVVFSAHGVPKSVPEHALSRNFFSIDATCPLVTKVHREAAIHFKRGREILLIGHSHHPEVVGTLGQLPAGAVTLIETAADAEAYQPKDPNNLAFVTQTTLSIDDTAGIVTVLRERFPNISGPHKEDICYATTNRQAAVKKVAPVVDAMIVVGAPNSSNSQRLREVAEREGCKVAVLVQRASDLDWSQFEGIKVLGLTAGASAPEVIVEEIMGAFAERFDLSVETVSAAEENEFFPVPRVLRPDAAE</sequence>